<accession>O75200</accession>
<accession>E7ERT9</accession>
<sequence>MRLRFWLLIWLLLGFISHQPTPVINSLAVYRHRETDFGVGVRDHPGQHGKTPSPQKLDNLIIIIIGFLRRYTFNVLFCTSCLCVSFLKTIFWSRNGHDGSMDVQQRAWRSNRSRQKGLRSICMHTKKRVSSFRGNKIGLKDVITLRRHVETKVRAKIRKRKVTTKINRHDKINGKRKTARKQKMFQRAQELRRRAEDYHKCKIPPSARKPLCNWVRMAAAEHCHSSGLPYWLYLTAETLKNRMGRQPPPPTQQHSITDNSLSLKTPPECLLTPLPPSVDDNIKECPLAPLPPSPLPPSVDDNLKECLFVPLPPSPLPPSVDDNLKECLFVPLPPSPLPPSVDDNLKTPPLATQEAEVEKPPKPKRWRVDEVEQSPKPKRQREAEAQQLPKPKRRRLSKLRTRHCTQAWAIRINP</sequence>
<protein>
    <recommendedName>
        <fullName>Nuclear pore complex-interacting protein family member B7</fullName>
    </recommendedName>
    <alternativeName>
        <fullName>Nuclear pore complex-interacting protein-like 1</fullName>
    </alternativeName>
</protein>
<proteinExistence type="inferred from homology"/>
<keyword id="KW-0175">Coiled coil</keyword>
<keyword id="KW-0325">Glycoprotein</keyword>
<keyword id="KW-1185">Reference proteome</keyword>
<keyword id="KW-0964">Secreted</keyword>
<keyword id="KW-0732">Signal</keyword>
<feature type="signal peptide" evidence="1">
    <location>
        <begin position="1"/>
        <end position="18"/>
    </location>
</feature>
<feature type="chain" id="PRO_0000326066" description="Nuclear pore complex-interacting protein family member B7">
    <location>
        <begin position="19"/>
        <end position="414"/>
    </location>
</feature>
<feature type="region of interest" description="Disordered" evidence="2">
    <location>
        <begin position="242"/>
        <end position="262"/>
    </location>
</feature>
<feature type="region of interest" description="Disordered" evidence="2">
    <location>
        <begin position="335"/>
        <end position="402"/>
    </location>
</feature>
<feature type="compositionally biased region" description="Polar residues" evidence="2">
    <location>
        <begin position="252"/>
        <end position="262"/>
    </location>
</feature>
<feature type="compositionally biased region" description="Basic and acidic residues" evidence="2">
    <location>
        <begin position="356"/>
        <end position="384"/>
    </location>
</feature>
<feature type="compositionally biased region" description="Basic residues" evidence="2">
    <location>
        <begin position="390"/>
        <end position="402"/>
    </location>
</feature>
<feature type="glycosylation site" description="N-linked (GlcNAc...) asparagine" evidence="1">
    <location>
        <position position="111"/>
    </location>
</feature>
<gene>
    <name type="primary">NPIPB7</name>
    <name type="synonym">NPIPL1</name>
</gene>
<dbReference type="EMBL" id="AC002544">
    <property type="protein sequence ID" value="AAC27429.1"/>
    <property type="status" value="ALT_SEQ"/>
    <property type="molecule type" value="Genomic_DNA"/>
</dbReference>
<dbReference type="EMBL" id="AC138894">
    <property type="status" value="NOT_ANNOTATED_CDS"/>
    <property type="molecule type" value="Genomic_DNA"/>
</dbReference>
<dbReference type="CCDS" id="CCDS92130.1"/>
<dbReference type="RefSeq" id="NP_001382959.1">
    <property type="nucleotide sequence ID" value="NM_001396030.1"/>
</dbReference>
<dbReference type="FunCoup" id="O75200">
    <property type="interactions" value="19"/>
</dbReference>
<dbReference type="GlyCosmos" id="O75200">
    <property type="glycosylation" value="1 site, No reported glycans"/>
</dbReference>
<dbReference type="GlyGen" id="O75200">
    <property type="glycosylation" value="2 sites"/>
</dbReference>
<dbReference type="iPTMnet" id="O75200"/>
<dbReference type="PhosphoSitePlus" id="O75200"/>
<dbReference type="BioMuta" id="NPIPB7"/>
<dbReference type="MassIVE" id="O75200"/>
<dbReference type="PeptideAtlas" id="O75200"/>
<dbReference type="ProteomicsDB" id="17851"/>
<dbReference type="Ensembl" id="ENST00000452313.6">
    <property type="protein sequence ID" value="ENSP00000405348.1"/>
    <property type="gene ID" value="ENSG00000233232.8"/>
</dbReference>
<dbReference type="GeneID" id="440350"/>
<dbReference type="MANE-Select" id="ENST00000452313.6">
    <property type="protein sequence ID" value="ENSP00000405348.1"/>
    <property type="RefSeq nucleotide sequence ID" value="NM_001396030.1"/>
    <property type="RefSeq protein sequence ID" value="NP_001382959.1"/>
</dbReference>
<dbReference type="UCSC" id="uc059smh.1">
    <property type="organism name" value="human"/>
</dbReference>
<dbReference type="AGR" id="HGNC:33832"/>
<dbReference type="GeneCards" id="NPIPB7"/>
<dbReference type="HGNC" id="HGNC:33832">
    <property type="gene designation" value="NPIPB7"/>
</dbReference>
<dbReference type="HPA" id="ENSG00000233232">
    <property type="expression patterns" value="Tissue enhanced (testis)"/>
</dbReference>
<dbReference type="neXtProt" id="NX_O75200"/>
<dbReference type="OpenTargets" id="ENSG00000233232"/>
<dbReference type="VEuPathDB" id="HostDB:ENSG00000233232"/>
<dbReference type="GeneTree" id="ENSGT00540000072033"/>
<dbReference type="InParanoid" id="O75200"/>
<dbReference type="OrthoDB" id="9470913at2759"/>
<dbReference type="PAN-GO" id="O75200">
    <property type="GO annotations" value="1 GO annotation based on evolutionary models"/>
</dbReference>
<dbReference type="PhylomeDB" id="O75200"/>
<dbReference type="TreeFam" id="TF333389"/>
<dbReference type="ChiTaRS" id="NPIPB7">
    <property type="organism name" value="human"/>
</dbReference>
<dbReference type="Pharos" id="O75200">
    <property type="development level" value="Tdark"/>
</dbReference>
<dbReference type="PRO" id="PR:O75200"/>
<dbReference type="Proteomes" id="UP000005640">
    <property type="component" value="Chromosome 16"/>
</dbReference>
<dbReference type="RNAct" id="O75200">
    <property type="molecule type" value="protein"/>
</dbReference>
<dbReference type="Bgee" id="ENSG00000233232">
    <property type="expression patterns" value="Expressed in left testis and 99 other cell types or tissues"/>
</dbReference>
<dbReference type="ExpressionAtlas" id="O75200">
    <property type="expression patterns" value="baseline and differential"/>
</dbReference>
<dbReference type="GO" id="GO:0005576">
    <property type="term" value="C:extracellular region"/>
    <property type="evidence" value="ECO:0007669"/>
    <property type="project" value="UniProtKB-SubCell"/>
</dbReference>
<dbReference type="InterPro" id="IPR009443">
    <property type="entry name" value="NPIP"/>
</dbReference>
<dbReference type="InterPro" id="IPR054697">
    <property type="entry name" value="NPIP_N"/>
</dbReference>
<dbReference type="PANTHER" id="PTHR15438">
    <property type="entry name" value="NUCLEAR PORE COMPLEX INTERACTING PROTEIN"/>
    <property type="match status" value="1"/>
</dbReference>
<dbReference type="PANTHER" id="PTHR15438:SF4">
    <property type="entry name" value="NUCLEAR PORE COMPLEX-INTERACTING PROTEIN FAMILY MEMBER B15-RELATED"/>
    <property type="match status" value="1"/>
</dbReference>
<dbReference type="Pfam" id="PF06409">
    <property type="entry name" value="NPIP"/>
    <property type="match status" value="1"/>
</dbReference>
<evidence type="ECO:0000255" key="1"/>
<evidence type="ECO:0000256" key="2">
    <source>
        <dbReference type="SAM" id="MobiDB-lite"/>
    </source>
</evidence>
<evidence type="ECO:0000305" key="3"/>
<reference key="1">
    <citation type="journal article" date="1999" name="Genomics">
        <title>Genome duplications and other features in 12 Mb of DNA sequence from human chromosome 16p and 16q.</title>
        <authorList>
            <person name="Loftus B.J."/>
            <person name="Kim U.-J."/>
            <person name="Sneddon V.P."/>
            <person name="Kalush F."/>
            <person name="Brandon R."/>
            <person name="Fuhrmann J."/>
            <person name="Mason T."/>
            <person name="Crosby M.L."/>
            <person name="Barnstead M."/>
            <person name="Cronin L."/>
            <person name="Mays A.D."/>
            <person name="Cao Y."/>
            <person name="Xu R.X."/>
            <person name="Kang H.-L."/>
            <person name="Mitchell S."/>
            <person name="Eichler E.E."/>
            <person name="Harris P.C."/>
            <person name="Venter J.C."/>
            <person name="Adams M.D."/>
        </authorList>
    </citation>
    <scope>NUCLEOTIDE SEQUENCE [LARGE SCALE GENOMIC DNA]</scope>
</reference>
<reference key="2">
    <citation type="journal article" date="2004" name="Nature">
        <title>The sequence and analysis of duplication-rich human chromosome 16.</title>
        <authorList>
            <person name="Martin J."/>
            <person name="Han C."/>
            <person name="Gordon L.A."/>
            <person name="Terry A."/>
            <person name="Prabhakar S."/>
            <person name="She X."/>
            <person name="Xie G."/>
            <person name="Hellsten U."/>
            <person name="Chan Y.M."/>
            <person name="Altherr M."/>
            <person name="Couronne O."/>
            <person name="Aerts A."/>
            <person name="Bajorek E."/>
            <person name="Black S."/>
            <person name="Blumer H."/>
            <person name="Branscomb E."/>
            <person name="Brown N.C."/>
            <person name="Bruno W.J."/>
            <person name="Buckingham J.M."/>
            <person name="Callen D.F."/>
            <person name="Campbell C.S."/>
            <person name="Campbell M.L."/>
            <person name="Campbell E.W."/>
            <person name="Caoile C."/>
            <person name="Challacombe J.F."/>
            <person name="Chasteen L.A."/>
            <person name="Chertkov O."/>
            <person name="Chi H.C."/>
            <person name="Christensen M."/>
            <person name="Clark L.M."/>
            <person name="Cohn J.D."/>
            <person name="Denys M."/>
            <person name="Detter J.C."/>
            <person name="Dickson M."/>
            <person name="Dimitrijevic-Bussod M."/>
            <person name="Escobar J."/>
            <person name="Fawcett J.J."/>
            <person name="Flowers D."/>
            <person name="Fotopulos D."/>
            <person name="Glavina T."/>
            <person name="Gomez M."/>
            <person name="Gonzales E."/>
            <person name="Goodstein D."/>
            <person name="Goodwin L.A."/>
            <person name="Grady D.L."/>
            <person name="Grigoriev I."/>
            <person name="Groza M."/>
            <person name="Hammon N."/>
            <person name="Hawkins T."/>
            <person name="Haydu L."/>
            <person name="Hildebrand C.E."/>
            <person name="Huang W."/>
            <person name="Israni S."/>
            <person name="Jett J."/>
            <person name="Jewett P.B."/>
            <person name="Kadner K."/>
            <person name="Kimball H."/>
            <person name="Kobayashi A."/>
            <person name="Krawczyk M.-C."/>
            <person name="Leyba T."/>
            <person name="Longmire J.L."/>
            <person name="Lopez F."/>
            <person name="Lou Y."/>
            <person name="Lowry S."/>
            <person name="Ludeman T."/>
            <person name="Manohar C.F."/>
            <person name="Mark G.A."/>
            <person name="McMurray K.L."/>
            <person name="Meincke L.J."/>
            <person name="Morgan J."/>
            <person name="Moyzis R.K."/>
            <person name="Mundt M.O."/>
            <person name="Munk A.C."/>
            <person name="Nandkeshwar R.D."/>
            <person name="Pitluck S."/>
            <person name="Pollard M."/>
            <person name="Predki P."/>
            <person name="Parson-Quintana B."/>
            <person name="Ramirez L."/>
            <person name="Rash S."/>
            <person name="Retterer J."/>
            <person name="Ricke D.O."/>
            <person name="Robinson D.L."/>
            <person name="Rodriguez A."/>
            <person name="Salamov A."/>
            <person name="Saunders E.H."/>
            <person name="Scott D."/>
            <person name="Shough T."/>
            <person name="Stallings R.L."/>
            <person name="Stalvey M."/>
            <person name="Sutherland R.D."/>
            <person name="Tapia R."/>
            <person name="Tesmer J.G."/>
            <person name="Thayer N."/>
            <person name="Thompson L.S."/>
            <person name="Tice H."/>
            <person name="Torney D.C."/>
            <person name="Tran-Gyamfi M."/>
            <person name="Tsai M."/>
            <person name="Ulanovsky L.E."/>
            <person name="Ustaszewska A."/>
            <person name="Vo N."/>
            <person name="White P.S."/>
            <person name="Williams A.L."/>
            <person name="Wills P.L."/>
            <person name="Wu J.-R."/>
            <person name="Wu K."/>
            <person name="Yang J."/>
            <person name="DeJong P."/>
            <person name="Bruce D."/>
            <person name="Doggett N.A."/>
            <person name="Deaven L."/>
            <person name="Schmutz J."/>
            <person name="Grimwood J."/>
            <person name="Richardson P."/>
            <person name="Rokhsar D.S."/>
            <person name="Eichler E.E."/>
            <person name="Gilna P."/>
            <person name="Lucas S.M."/>
            <person name="Myers R.M."/>
            <person name="Rubin E.M."/>
            <person name="Pennacchio L.A."/>
        </authorList>
    </citation>
    <scope>NUCLEOTIDE SEQUENCE [LARGE SCALE GENOMIC DNA]</scope>
</reference>
<name>NPIB7_HUMAN</name>
<comment type="subcellular location">
    <subcellularLocation>
        <location evidence="3">Secreted</location>
    </subcellularLocation>
</comment>
<comment type="similarity">
    <text evidence="3">Belongs to the NPIP family.</text>
</comment>
<comment type="sequence caution" evidence="3">
    <conflict type="erroneous gene model prediction">
        <sequence resource="EMBL-CDS" id="AAC27429"/>
    </conflict>
</comment>
<organism>
    <name type="scientific">Homo sapiens</name>
    <name type="common">Human</name>
    <dbReference type="NCBI Taxonomy" id="9606"/>
    <lineage>
        <taxon>Eukaryota</taxon>
        <taxon>Metazoa</taxon>
        <taxon>Chordata</taxon>
        <taxon>Craniata</taxon>
        <taxon>Vertebrata</taxon>
        <taxon>Euteleostomi</taxon>
        <taxon>Mammalia</taxon>
        <taxon>Eutheria</taxon>
        <taxon>Euarchontoglires</taxon>
        <taxon>Primates</taxon>
        <taxon>Haplorrhini</taxon>
        <taxon>Catarrhini</taxon>
        <taxon>Hominidae</taxon>
        <taxon>Homo</taxon>
    </lineage>
</organism>